<dbReference type="EMBL" id="CP000319">
    <property type="protein sequence ID" value="ABE62168.1"/>
    <property type="molecule type" value="Genomic_DNA"/>
</dbReference>
<dbReference type="RefSeq" id="WP_011509860.1">
    <property type="nucleotide sequence ID" value="NC_007964.1"/>
</dbReference>
<dbReference type="SMR" id="Q1QNM9"/>
<dbReference type="STRING" id="323097.Nham_1344"/>
<dbReference type="KEGG" id="nha:Nham_1344"/>
<dbReference type="eggNOG" id="COG1706">
    <property type="taxonomic scope" value="Bacteria"/>
</dbReference>
<dbReference type="HOGENOM" id="CLU_045235_1_0_5"/>
<dbReference type="OrthoDB" id="9786431at2"/>
<dbReference type="Proteomes" id="UP000001953">
    <property type="component" value="Chromosome"/>
</dbReference>
<dbReference type="GO" id="GO:0009428">
    <property type="term" value="C:bacterial-type flagellum basal body, distal rod, P ring"/>
    <property type="evidence" value="ECO:0007669"/>
    <property type="project" value="InterPro"/>
</dbReference>
<dbReference type="GO" id="GO:0030288">
    <property type="term" value="C:outer membrane-bounded periplasmic space"/>
    <property type="evidence" value="ECO:0007669"/>
    <property type="project" value="InterPro"/>
</dbReference>
<dbReference type="GO" id="GO:0005198">
    <property type="term" value="F:structural molecule activity"/>
    <property type="evidence" value="ECO:0007669"/>
    <property type="project" value="InterPro"/>
</dbReference>
<dbReference type="GO" id="GO:0071973">
    <property type="term" value="P:bacterial-type flagellum-dependent cell motility"/>
    <property type="evidence" value="ECO:0007669"/>
    <property type="project" value="InterPro"/>
</dbReference>
<dbReference type="HAMAP" id="MF_00416">
    <property type="entry name" value="FlgI"/>
    <property type="match status" value="1"/>
</dbReference>
<dbReference type="InterPro" id="IPR001782">
    <property type="entry name" value="Flag_FlgI"/>
</dbReference>
<dbReference type="NCBIfam" id="NF003676">
    <property type="entry name" value="PRK05303.1"/>
    <property type="match status" value="1"/>
</dbReference>
<dbReference type="PANTHER" id="PTHR30381">
    <property type="entry name" value="FLAGELLAR P-RING PERIPLASMIC PROTEIN FLGI"/>
    <property type="match status" value="1"/>
</dbReference>
<dbReference type="PANTHER" id="PTHR30381:SF0">
    <property type="entry name" value="FLAGELLAR P-RING PROTEIN"/>
    <property type="match status" value="1"/>
</dbReference>
<dbReference type="Pfam" id="PF02119">
    <property type="entry name" value="FlgI"/>
    <property type="match status" value="1"/>
</dbReference>
<dbReference type="PRINTS" id="PR01010">
    <property type="entry name" value="FLGPRINGFLGI"/>
</dbReference>
<keyword id="KW-0975">Bacterial flagellum</keyword>
<keyword id="KW-0574">Periplasm</keyword>
<keyword id="KW-1185">Reference proteome</keyword>
<keyword id="KW-0732">Signal</keyword>
<name>FLGI_NITHX</name>
<proteinExistence type="inferred from homology"/>
<organism>
    <name type="scientific">Nitrobacter hamburgensis (strain DSM 10229 / NCIMB 13809 / X14)</name>
    <dbReference type="NCBI Taxonomy" id="323097"/>
    <lineage>
        <taxon>Bacteria</taxon>
        <taxon>Pseudomonadati</taxon>
        <taxon>Pseudomonadota</taxon>
        <taxon>Alphaproteobacteria</taxon>
        <taxon>Hyphomicrobiales</taxon>
        <taxon>Nitrobacteraceae</taxon>
        <taxon>Nitrobacter</taxon>
    </lineage>
</organism>
<evidence type="ECO:0000255" key="1">
    <source>
        <dbReference type="HAMAP-Rule" id="MF_00416"/>
    </source>
</evidence>
<comment type="function">
    <text evidence="1">Assembles around the rod to form the L-ring and probably protects the motor/basal body from shearing forces during rotation.</text>
</comment>
<comment type="subunit">
    <text evidence="1">The basal body constitutes a major portion of the flagellar organelle and consists of four rings (L,P,S, and M) mounted on a central rod.</text>
</comment>
<comment type="subcellular location">
    <subcellularLocation>
        <location evidence="1">Periplasm</location>
    </subcellularLocation>
    <subcellularLocation>
        <location evidence="1">Bacterial flagellum basal body</location>
    </subcellularLocation>
</comment>
<comment type="similarity">
    <text evidence="1">Belongs to the FlgI family.</text>
</comment>
<protein>
    <recommendedName>
        <fullName evidence="1">Flagellar P-ring protein</fullName>
    </recommendedName>
    <alternativeName>
        <fullName evidence="1">Basal body P-ring protein</fullName>
    </alternativeName>
</protein>
<reference key="1">
    <citation type="submission" date="2006-03" db="EMBL/GenBank/DDBJ databases">
        <title>Complete sequence of chromosome of Nitrobacter hamburgensis X14.</title>
        <authorList>
            <consortium name="US DOE Joint Genome Institute"/>
            <person name="Copeland A."/>
            <person name="Lucas S."/>
            <person name="Lapidus A."/>
            <person name="Barry K."/>
            <person name="Detter J.C."/>
            <person name="Glavina del Rio T."/>
            <person name="Hammon N."/>
            <person name="Israni S."/>
            <person name="Dalin E."/>
            <person name="Tice H."/>
            <person name="Pitluck S."/>
            <person name="Chain P."/>
            <person name="Malfatti S."/>
            <person name="Shin M."/>
            <person name="Vergez L."/>
            <person name="Schmutz J."/>
            <person name="Larimer F."/>
            <person name="Land M."/>
            <person name="Hauser L."/>
            <person name="Kyrpides N."/>
            <person name="Ivanova N."/>
            <person name="Ward B."/>
            <person name="Arp D."/>
            <person name="Klotz M."/>
            <person name="Stein L."/>
            <person name="O'Mullan G."/>
            <person name="Starkenburg S."/>
            <person name="Sayavedra L."/>
            <person name="Poret-Peterson A.T."/>
            <person name="Gentry M.E."/>
            <person name="Bruce D."/>
            <person name="Richardson P."/>
        </authorList>
    </citation>
    <scope>NUCLEOTIDE SEQUENCE [LARGE SCALE GENOMIC DNA]</scope>
    <source>
        <strain>DSM 10229 / NCIMB 13809 / X14</strain>
    </source>
</reference>
<sequence>MPGVGISRIVRIAVAALVALAPLMTPAHATSRIKDLANIEGVRQNQLIGYGLVVGLNGTGDTLNNIPFTKQSLQAMLERMGVNIRGATIRTGNVAAVMVTGNLPAFATQGTRMDVTVSAMGDAKSLHGGTLLVTPLLGADGNVYAVAQGSLAIGGFAAEGAAASVTKGVPTNGRIANGAIVEREIEFALNKMPNVRLALRNGDFTTAKRIAAAVNDFLGTKTAEPIDPSTVQLSIPAEFKGNVVALLTEIEQLQVEPDTAAKIIIDERSGIIVMGRDVRVATVAVAQGNLTVSISESPQVSQPNPLSRGRTVVTPRTAVGVTEDGKKLALVKNGVSLQELVDGLNGLGIGPRDLIGILQAIKAAGAIEADIEVM</sequence>
<accession>Q1QNM9</accession>
<feature type="signal peptide" evidence="1">
    <location>
        <begin position="1"/>
        <end position="29"/>
    </location>
</feature>
<feature type="chain" id="PRO_5000117595" description="Flagellar P-ring protein">
    <location>
        <begin position="30"/>
        <end position="374"/>
    </location>
</feature>
<gene>
    <name evidence="1" type="primary">flgI</name>
    <name type="ordered locus">Nham_1344</name>
</gene>